<keyword id="KW-0963">Cytoplasm</keyword>
<keyword id="KW-0413">Isomerase</keyword>
<keyword id="KW-1185">Reference proteome</keyword>
<keyword id="KW-0697">Rotamase</keyword>
<comment type="function">
    <text evidence="1">PPIases accelerate the folding of proteins. It catalyzes the cis-trans isomerization of proline imidic peptide bonds in oligopeptides (By similarity).</text>
</comment>
<comment type="catalytic activity">
    <reaction>
        <text>[protein]-peptidylproline (omega=180) = [protein]-peptidylproline (omega=0)</text>
        <dbReference type="Rhea" id="RHEA:16237"/>
        <dbReference type="Rhea" id="RHEA-COMP:10747"/>
        <dbReference type="Rhea" id="RHEA-COMP:10748"/>
        <dbReference type="ChEBI" id="CHEBI:83833"/>
        <dbReference type="ChEBI" id="CHEBI:83834"/>
        <dbReference type="EC" id="5.2.1.8"/>
    </reaction>
</comment>
<comment type="activity regulation">
    <text evidence="1">Inhibited by both FK506 and rapamycin.</text>
</comment>
<comment type="subcellular location">
    <subcellularLocation>
        <location evidence="1">Cytoplasm</location>
    </subcellularLocation>
</comment>
<comment type="similarity">
    <text evidence="4">Belongs to the FKBP-type PPIase family. FKBP1 subfamily.</text>
</comment>
<comment type="sequence caution" evidence="4">
    <conflict type="erroneous initiation">
        <sequence resource="EMBL-CDS" id="CAG85219"/>
    </conflict>
</comment>
<feature type="chain" id="PRO_0000233324" description="FK506-binding protein 1">
    <location>
        <begin position="1"/>
        <end position="112"/>
    </location>
</feature>
<feature type="domain" description="PPIase FKBP-type" evidence="2">
    <location>
        <begin position="24"/>
        <end position="112"/>
    </location>
</feature>
<feature type="region of interest" description="Disordered" evidence="3">
    <location>
        <begin position="1"/>
        <end position="20"/>
    </location>
</feature>
<feature type="compositionally biased region" description="Polar residues" evidence="3">
    <location>
        <begin position="1"/>
        <end position="10"/>
    </location>
</feature>
<gene>
    <name type="primary">FPR1</name>
    <name type="ordered locus">DEHA2B06050g</name>
</gene>
<reference key="1">
    <citation type="journal article" date="2004" name="Nature">
        <title>Genome evolution in yeasts.</title>
        <authorList>
            <person name="Dujon B."/>
            <person name="Sherman D."/>
            <person name="Fischer G."/>
            <person name="Durrens P."/>
            <person name="Casaregola S."/>
            <person name="Lafontaine I."/>
            <person name="de Montigny J."/>
            <person name="Marck C."/>
            <person name="Neuveglise C."/>
            <person name="Talla E."/>
            <person name="Goffard N."/>
            <person name="Frangeul L."/>
            <person name="Aigle M."/>
            <person name="Anthouard V."/>
            <person name="Babour A."/>
            <person name="Barbe V."/>
            <person name="Barnay S."/>
            <person name="Blanchin S."/>
            <person name="Beckerich J.-M."/>
            <person name="Beyne E."/>
            <person name="Bleykasten C."/>
            <person name="Boisrame A."/>
            <person name="Boyer J."/>
            <person name="Cattolico L."/>
            <person name="Confanioleri F."/>
            <person name="de Daruvar A."/>
            <person name="Despons L."/>
            <person name="Fabre E."/>
            <person name="Fairhead C."/>
            <person name="Ferry-Dumazet H."/>
            <person name="Groppi A."/>
            <person name="Hantraye F."/>
            <person name="Hennequin C."/>
            <person name="Jauniaux N."/>
            <person name="Joyet P."/>
            <person name="Kachouri R."/>
            <person name="Kerrest A."/>
            <person name="Koszul R."/>
            <person name="Lemaire M."/>
            <person name="Lesur I."/>
            <person name="Ma L."/>
            <person name="Muller H."/>
            <person name="Nicaud J.-M."/>
            <person name="Nikolski M."/>
            <person name="Oztas S."/>
            <person name="Ozier-Kalogeropoulos O."/>
            <person name="Pellenz S."/>
            <person name="Potier S."/>
            <person name="Richard G.-F."/>
            <person name="Straub M.-L."/>
            <person name="Suleau A."/>
            <person name="Swennen D."/>
            <person name="Tekaia F."/>
            <person name="Wesolowski-Louvel M."/>
            <person name="Westhof E."/>
            <person name="Wirth B."/>
            <person name="Zeniou-Meyer M."/>
            <person name="Zivanovic Y."/>
            <person name="Bolotin-Fukuhara M."/>
            <person name="Thierry A."/>
            <person name="Bouchier C."/>
            <person name="Caudron B."/>
            <person name="Scarpelli C."/>
            <person name="Gaillardin C."/>
            <person name="Weissenbach J."/>
            <person name="Wincker P."/>
            <person name="Souciet J.-L."/>
        </authorList>
    </citation>
    <scope>NUCLEOTIDE SEQUENCE [LARGE SCALE GENOMIC DNA]</scope>
    <source>
        <strain>ATCC 36239 / CBS 767 / BCRC 21394 / JCM 1990 / NBRC 0083 / IGC 2968</strain>
    </source>
</reference>
<name>FKBP_DEBHA</name>
<sequence length="112" mass="11952">MSAPATTQVEILQEGDGKTFPKPGDLVTIHYTGTLENGKKFDSSRDRGKPFQCTIGVGQVIVGWDTGIPKLSVGSRAKLSIPGHEAYGDRGFPGLIPPNATLLFDVELLNVN</sequence>
<organism>
    <name type="scientific">Debaryomyces hansenii (strain ATCC 36239 / CBS 767 / BCRC 21394 / JCM 1990 / NBRC 0083 / IGC 2968)</name>
    <name type="common">Yeast</name>
    <name type="synonym">Torulaspora hansenii</name>
    <dbReference type="NCBI Taxonomy" id="284592"/>
    <lineage>
        <taxon>Eukaryota</taxon>
        <taxon>Fungi</taxon>
        <taxon>Dikarya</taxon>
        <taxon>Ascomycota</taxon>
        <taxon>Saccharomycotina</taxon>
        <taxon>Pichiomycetes</taxon>
        <taxon>Debaryomycetaceae</taxon>
        <taxon>Debaryomyces</taxon>
    </lineage>
</organism>
<accession>Q6BX45</accession>
<evidence type="ECO:0000250" key="1"/>
<evidence type="ECO:0000255" key="2">
    <source>
        <dbReference type="PROSITE-ProRule" id="PRU00277"/>
    </source>
</evidence>
<evidence type="ECO:0000256" key="3">
    <source>
        <dbReference type="SAM" id="MobiDB-lite"/>
    </source>
</evidence>
<evidence type="ECO:0000305" key="4"/>
<protein>
    <recommendedName>
        <fullName>FK506-binding protein 1</fullName>
        <shortName>FKBP</shortName>
        <ecNumber>5.2.1.8</ecNumber>
    </recommendedName>
    <alternativeName>
        <fullName>Peptidyl-prolyl cis-trans isomerase</fullName>
        <shortName>PPIase</shortName>
    </alternativeName>
    <alternativeName>
        <fullName>Rapamycin-binding protein</fullName>
    </alternativeName>
</protein>
<proteinExistence type="inferred from homology"/>
<dbReference type="EC" id="5.2.1.8"/>
<dbReference type="EMBL" id="CR382134">
    <property type="protein sequence ID" value="CAG85219.2"/>
    <property type="status" value="ALT_INIT"/>
    <property type="molecule type" value="Genomic_DNA"/>
</dbReference>
<dbReference type="RefSeq" id="XP_457224.2">
    <property type="nucleotide sequence ID" value="XM_457224.2"/>
</dbReference>
<dbReference type="SMR" id="Q6BX45"/>
<dbReference type="FunCoup" id="Q6BX45">
    <property type="interactions" value="400"/>
</dbReference>
<dbReference type="STRING" id="284592.Q6BX45"/>
<dbReference type="GeneID" id="2913415"/>
<dbReference type="KEGG" id="dha:DEHA2B06050g"/>
<dbReference type="eggNOG" id="KOG0544">
    <property type="taxonomic scope" value="Eukaryota"/>
</dbReference>
<dbReference type="HOGENOM" id="CLU_013615_12_1_1"/>
<dbReference type="InParanoid" id="Q6BX45"/>
<dbReference type="OrthoDB" id="1902587at2759"/>
<dbReference type="Proteomes" id="UP000000599">
    <property type="component" value="Chromosome B"/>
</dbReference>
<dbReference type="GO" id="GO:0005737">
    <property type="term" value="C:cytoplasm"/>
    <property type="evidence" value="ECO:0007669"/>
    <property type="project" value="UniProtKB-SubCell"/>
</dbReference>
<dbReference type="GO" id="GO:0003755">
    <property type="term" value="F:peptidyl-prolyl cis-trans isomerase activity"/>
    <property type="evidence" value="ECO:0007669"/>
    <property type="project" value="UniProtKB-KW"/>
</dbReference>
<dbReference type="FunFam" id="3.10.50.40:FF:000025">
    <property type="entry name" value="Peptidylprolyl isomerase"/>
    <property type="match status" value="1"/>
</dbReference>
<dbReference type="Gene3D" id="3.10.50.40">
    <property type="match status" value="1"/>
</dbReference>
<dbReference type="InterPro" id="IPR050689">
    <property type="entry name" value="FKBP-type_PPIase"/>
</dbReference>
<dbReference type="InterPro" id="IPR046357">
    <property type="entry name" value="PPIase_dom_sf"/>
</dbReference>
<dbReference type="InterPro" id="IPR001179">
    <property type="entry name" value="PPIase_FKBP_dom"/>
</dbReference>
<dbReference type="PANTHER" id="PTHR10516:SF443">
    <property type="entry name" value="FK506-BINDING PROTEIN 59-RELATED"/>
    <property type="match status" value="1"/>
</dbReference>
<dbReference type="PANTHER" id="PTHR10516">
    <property type="entry name" value="PEPTIDYL-PROLYL CIS-TRANS ISOMERASE"/>
    <property type="match status" value="1"/>
</dbReference>
<dbReference type="Pfam" id="PF00254">
    <property type="entry name" value="FKBP_C"/>
    <property type="match status" value="1"/>
</dbReference>
<dbReference type="SUPFAM" id="SSF54534">
    <property type="entry name" value="FKBP-like"/>
    <property type="match status" value="1"/>
</dbReference>
<dbReference type="PROSITE" id="PS50059">
    <property type="entry name" value="FKBP_PPIASE"/>
    <property type="match status" value="1"/>
</dbReference>